<keyword id="KW-0021">Allosteric enzyme</keyword>
<keyword id="KW-0963">Cytoplasm</keyword>
<keyword id="KW-0378">Hydrolase</keyword>
<keyword id="KW-0479">Metal-binding</keyword>
<keyword id="KW-0645">Protease</keyword>
<keyword id="KW-0915">Sodium</keyword>
<keyword id="KW-0888">Threonine protease</keyword>
<dbReference type="EC" id="3.4.25.2" evidence="1"/>
<dbReference type="EMBL" id="CP000969">
    <property type="protein sequence ID" value="ACB08772.1"/>
    <property type="molecule type" value="Genomic_DNA"/>
</dbReference>
<dbReference type="RefSeq" id="WP_011943053.1">
    <property type="nucleotide sequence ID" value="NC_010483.1"/>
</dbReference>
<dbReference type="SMR" id="B1L8X4"/>
<dbReference type="MEROPS" id="T01.006"/>
<dbReference type="KEGG" id="trq:TRQ2_0416"/>
<dbReference type="HOGENOM" id="CLU_093872_1_0_0"/>
<dbReference type="Proteomes" id="UP000001687">
    <property type="component" value="Chromosome"/>
</dbReference>
<dbReference type="GO" id="GO:0009376">
    <property type="term" value="C:HslUV protease complex"/>
    <property type="evidence" value="ECO:0007669"/>
    <property type="project" value="UniProtKB-UniRule"/>
</dbReference>
<dbReference type="GO" id="GO:0005839">
    <property type="term" value="C:proteasome core complex"/>
    <property type="evidence" value="ECO:0007669"/>
    <property type="project" value="InterPro"/>
</dbReference>
<dbReference type="GO" id="GO:0046872">
    <property type="term" value="F:metal ion binding"/>
    <property type="evidence" value="ECO:0007669"/>
    <property type="project" value="UniProtKB-KW"/>
</dbReference>
<dbReference type="GO" id="GO:0004298">
    <property type="term" value="F:threonine-type endopeptidase activity"/>
    <property type="evidence" value="ECO:0007669"/>
    <property type="project" value="UniProtKB-KW"/>
</dbReference>
<dbReference type="GO" id="GO:0051603">
    <property type="term" value="P:proteolysis involved in protein catabolic process"/>
    <property type="evidence" value="ECO:0007669"/>
    <property type="project" value="InterPro"/>
</dbReference>
<dbReference type="CDD" id="cd01913">
    <property type="entry name" value="protease_HslV"/>
    <property type="match status" value="1"/>
</dbReference>
<dbReference type="FunFam" id="3.60.20.10:FF:000002">
    <property type="entry name" value="ATP-dependent protease subunit HslV"/>
    <property type="match status" value="1"/>
</dbReference>
<dbReference type="Gene3D" id="3.60.20.10">
    <property type="entry name" value="Glutamine Phosphoribosylpyrophosphate, subunit 1, domain 1"/>
    <property type="match status" value="1"/>
</dbReference>
<dbReference type="HAMAP" id="MF_00248">
    <property type="entry name" value="HslV"/>
    <property type="match status" value="1"/>
</dbReference>
<dbReference type="InterPro" id="IPR022281">
    <property type="entry name" value="ATP-dep_Prtase_HsIV_su"/>
</dbReference>
<dbReference type="InterPro" id="IPR029055">
    <property type="entry name" value="Ntn_hydrolases_N"/>
</dbReference>
<dbReference type="InterPro" id="IPR001353">
    <property type="entry name" value="Proteasome_sua/b"/>
</dbReference>
<dbReference type="InterPro" id="IPR023333">
    <property type="entry name" value="Proteasome_suB-type"/>
</dbReference>
<dbReference type="NCBIfam" id="TIGR03692">
    <property type="entry name" value="ATP_dep_HslV"/>
    <property type="match status" value="1"/>
</dbReference>
<dbReference type="NCBIfam" id="NF003964">
    <property type="entry name" value="PRK05456.1"/>
    <property type="match status" value="1"/>
</dbReference>
<dbReference type="PANTHER" id="PTHR32194:SF0">
    <property type="entry name" value="ATP-DEPENDENT PROTEASE SUBUNIT HSLV"/>
    <property type="match status" value="1"/>
</dbReference>
<dbReference type="PANTHER" id="PTHR32194">
    <property type="entry name" value="METALLOPROTEASE TLDD"/>
    <property type="match status" value="1"/>
</dbReference>
<dbReference type="Pfam" id="PF00227">
    <property type="entry name" value="Proteasome"/>
    <property type="match status" value="1"/>
</dbReference>
<dbReference type="PIRSF" id="PIRSF039093">
    <property type="entry name" value="HslV"/>
    <property type="match status" value="1"/>
</dbReference>
<dbReference type="SUPFAM" id="SSF56235">
    <property type="entry name" value="N-terminal nucleophile aminohydrolases (Ntn hydrolases)"/>
    <property type="match status" value="1"/>
</dbReference>
<dbReference type="PROSITE" id="PS51476">
    <property type="entry name" value="PROTEASOME_BETA_2"/>
    <property type="match status" value="1"/>
</dbReference>
<proteinExistence type="inferred from homology"/>
<name>HSLV_THESQ</name>
<comment type="function">
    <text evidence="1">Protease subunit of a proteasome-like degradation complex believed to be a general protein degrading machinery.</text>
</comment>
<comment type="catalytic activity">
    <reaction evidence="1">
        <text>ATP-dependent cleavage of peptide bonds with broad specificity.</text>
        <dbReference type="EC" id="3.4.25.2"/>
    </reaction>
</comment>
<comment type="activity regulation">
    <text evidence="1">Allosterically activated by HslU binding.</text>
</comment>
<comment type="subunit">
    <text evidence="1">A double ring-shaped homohexamer of HslV is capped on each side by a ring-shaped HslU homohexamer. The assembly of the HslU/HslV complex is dependent on binding of ATP.</text>
</comment>
<comment type="subcellular location">
    <subcellularLocation>
        <location evidence="1">Cytoplasm</location>
    </subcellularLocation>
</comment>
<comment type="similarity">
    <text evidence="1">Belongs to the peptidase T1B family. HslV subfamily.</text>
</comment>
<evidence type="ECO:0000255" key="1">
    <source>
        <dbReference type="HAMAP-Rule" id="MF_00248"/>
    </source>
</evidence>
<organism>
    <name type="scientific">Thermotoga sp. (strain RQ2)</name>
    <dbReference type="NCBI Taxonomy" id="126740"/>
    <lineage>
        <taxon>Bacteria</taxon>
        <taxon>Thermotogati</taxon>
        <taxon>Thermotogota</taxon>
        <taxon>Thermotogae</taxon>
        <taxon>Thermotogales</taxon>
        <taxon>Thermotogaceae</taxon>
        <taxon>Thermotoga</taxon>
    </lineage>
</organism>
<protein>
    <recommendedName>
        <fullName evidence="1">ATP-dependent protease subunit HslV</fullName>
        <ecNumber evidence="1">3.4.25.2</ecNumber>
    </recommendedName>
</protein>
<gene>
    <name evidence="1" type="primary">hslV</name>
    <name type="ordered locus">TRQ2_0416</name>
</gene>
<accession>B1L8X4</accession>
<reference key="1">
    <citation type="journal article" date="2011" name="J. Bacteriol.">
        <title>Genome sequence of Thermotoga sp. strain RQ2, a hyperthermophilic bacterium isolated from a geothermally heated region of the seafloor near Ribeira Quente, the Azores.</title>
        <authorList>
            <person name="Swithers K.S."/>
            <person name="DiPippo J.L."/>
            <person name="Bruce D.C."/>
            <person name="Detter C."/>
            <person name="Tapia R."/>
            <person name="Han S."/>
            <person name="Saunders E."/>
            <person name="Goodwin L.A."/>
            <person name="Han J."/>
            <person name="Woyke T."/>
            <person name="Pitluck S."/>
            <person name="Pennacchio L."/>
            <person name="Nolan M."/>
            <person name="Mikhailova N."/>
            <person name="Lykidis A."/>
            <person name="Land M.L."/>
            <person name="Brettin T."/>
            <person name="Stetter K.O."/>
            <person name="Nelson K.E."/>
            <person name="Gogarten J.P."/>
            <person name="Noll K.M."/>
        </authorList>
    </citation>
    <scope>NUCLEOTIDE SEQUENCE [LARGE SCALE GENOMIC DNA]</scope>
    <source>
        <strain>RQ2</strain>
    </source>
</reference>
<sequence>MKFHGTTILVVRRNGQTVMGGDGQVTFGSTVLKGNARKVRKLGEGKVLAGFAGSVADAMTLFDRFEAKLREWGGNLTKAAVELAKDWRTDRVLRRLEALLLVADKENIFIISGNGEVIQPDDDAAAIGSGGPYALAAAKALLRNTDLSAREIVEKAMMIAGEICIYTNQNIVIEEV</sequence>
<feature type="chain" id="PRO_1000100923" description="ATP-dependent protease subunit HslV">
    <location>
        <begin position="1"/>
        <end position="176"/>
    </location>
</feature>
<feature type="active site" evidence="1">
    <location>
        <position position="6"/>
    </location>
</feature>
<feature type="binding site" evidence="1">
    <location>
        <position position="161"/>
    </location>
    <ligand>
        <name>Na(+)</name>
        <dbReference type="ChEBI" id="CHEBI:29101"/>
    </ligand>
</feature>
<feature type="binding site" evidence="1">
    <location>
        <position position="164"/>
    </location>
    <ligand>
        <name>Na(+)</name>
        <dbReference type="ChEBI" id="CHEBI:29101"/>
    </ligand>
</feature>
<feature type="binding site" evidence="1">
    <location>
        <position position="167"/>
    </location>
    <ligand>
        <name>Na(+)</name>
        <dbReference type="ChEBI" id="CHEBI:29101"/>
    </ligand>
</feature>